<gene>
    <name evidence="1" type="primary">hrcA</name>
    <name type="ordered locus">spyM18_1833</name>
</gene>
<name>HRCA_STRP8</name>
<evidence type="ECO:0000255" key="1">
    <source>
        <dbReference type="HAMAP-Rule" id="MF_00081"/>
    </source>
</evidence>
<proteinExistence type="inferred from homology"/>
<organism>
    <name type="scientific">Streptococcus pyogenes serotype M18 (strain MGAS8232)</name>
    <dbReference type="NCBI Taxonomy" id="186103"/>
    <lineage>
        <taxon>Bacteria</taxon>
        <taxon>Bacillati</taxon>
        <taxon>Bacillota</taxon>
        <taxon>Bacilli</taxon>
        <taxon>Lactobacillales</taxon>
        <taxon>Streptococcaceae</taxon>
        <taxon>Streptococcus</taxon>
    </lineage>
</organism>
<protein>
    <recommendedName>
        <fullName evidence="1">Heat-inducible transcription repressor HrcA</fullName>
    </recommendedName>
</protein>
<feature type="chain" id="PRO_0000182545" description="Heat-inducible transcription repressor HrcA">
    <location>
        <begin position="1"/>
        <end position="344"/>
    </location>
</feature>
<dbReference type="EMBL" id="AE009949">
    <property type="protein sequence ID" value="AAL98351.1"/>
    <property type="molecule type" value="Genomic_DNA"/>
</dbReference>
<dbReference type="RefSeq" id="WP_002983310.1">
    <property type="nucleotide sequence ID" value="NC_003485.1"/>
</dbReference>
<dbReference type="SMR" id="Q8NZM6"/>
<dbReference type="GeneID" id="69900392"/>
<dbReference type="KEGG" id="spm:spyM18_1833"/>
<dbReference type="HOGENOM" id="CLU_050019_1_0_9"/>
<dbReference type="GO" id="GO:0003677">
    <property type="term" value="F:DNA binding"/>
    <property type="evidence" value="ECO:0007669"/>
    <property type="project" value="InterPro"/>
</dbReference>
<dbReference type="GO" id="GO:0045892">
    <property type="term" value="P:negative regulation of DNA-templated transcription"/>
    <property type="evidence" value="ECO:0007669"/>
    <property type="project" value="UniProtKB-UniRule"/>
</dbReference>
<dbReference type="Gene3D" id="3.30.450.40">
    <property type="match status" value="1"/>
</dbReference>
<dbReference type="Gene3D" id="3.30.390.60">
    <property type="entry name" value="Heat-inducible transcription repressor hrca homolog, domain 3"/>
    <property type="match status" value="1"/>
</dbReference>
<dbReference type="Gene3D" id="1.10.10.10">
    <property type="entry name" value="Winged helix-like DNA-binding domain superfamily/Winged helix DNA-binding domain"/>
    <property type="match status" value="1"/>
</dbReference>
<dbReference type="HAMAP" id="MF_00081">
    <property type="entry name" value="HrcA"/>
    <property type="match status" value="1"/>
</dbReference>
<dbReference type="InterPro" id="IPR029016">
    <property type="entry name" value="GAF-like_dom_sf"/>
</dbReference>
<dbReference type="InterPro" id="IPR002571">
    <property type="entry name" value="HrcA"/>
</dbReference>
<dbReference type="InterPro" id="IPR021153">
    <property type="entry name" value="HrcA_C"/>
</dbReference>
<dbReference type="InterPro" id="IPR036388">
    <property type="entry name" value="WH-like_DNA-bd_sf"/>
</dbReference>
<dbReference type="InterPro" id="IPR036390">
    <property type="entry name" value="WH_DNA-bd_sf"/>
</dbReference>
<dbReference type="InterPro" id="IPR005104">
    <property type="entry name" value="WHTH_HrcA_DNA-bd"/>
</dbReference>
<dbReference type="InterPro" id="IPR023120">
    <property type="entry name" value="WHTH_transcript_rep_HrcA_IDD"/>
</dbReference>
<dbReference type="NCBIfam" id="TIGR00331">
    <property type="entry name" value="hrcA"/>
    <property type="match status" value="1"/>
</dbReference>
<dbReference type="PANTHER" id="PTHR34824">
    <property type="entry name" value="HEAT-INDUCIBLE TRANSCRIPTION REPRESSOR HRCA"/>
    <property type="match status" value="1"/>
</dbReference>
<dbReference type="PANTHER" id="PTHR34824:SF1">
    <property type="entry name" value="HEAT-INDUCIBLE TRANSCRIPTION REPRESSOR HRCA"/>
    <property type="match status" value="1"/>
</dbReference>
<dbReference type="Pfam" id="PF01628">
    <property type="entry name" value="HrcA"/>
    <property type="match status" value="1"/>
</dbReference>
<dbReference type="Pfam" id="PF03444">
    <property type="entry name" value="HrcA_DNA-bdg"/>
    <property type="match status" value="1"/>
</dbReference>
<dbReference type="PIRSF" id="PIRSF005485">
    <property type="entry name" value="HrcA"/>
    <property type="match status" value="1"/>
</dbReference>
<dbReference type="SUPFAM" id="SSF55781">
    <property type="entry name" value="GAF domain-like"/>
    <property type="match status" value="1"/>
</dbReference>
<dbReference type="SUPFAM" id="SSF46785">
    <property type="entry name" value="Winged helix' DNA-binding domain"/>
    <property type="match status" value="1"/>
</dbReference>
<sequence length="344" mass="39027">MITQRQNDILNLIVELFTQTHEPVGSKALQRTIDSSSATIRNDMAKLEKLGLLEKAHTSSGRMPSPAGFKYFVEHSLRLDSIDEQDIYHVIKTFDFEAFKLEDMLQKASHILAEMTGYTSVILDVEPARQRLTGFDVVQLSNHDALAVMTLDESKPVTVQFAIPRNFLTRDLIAFKAIVEERLLDSSVIDIHYKLRTEIPQIVQKYFVTTDNVLQLFDYVFSELFLETVFVAGKVNSLTYSDLSTYQFLDNEQQVAISLRQSLKEGEMASVQVADSQEAALADVSVLTHKFLIPYRGFGLLSLIGPIDMDYRRSVSLVNIIGKVLAAKLGDYYRYLNSNHYEVH</sequence>
<keyword id="KW-0678">Repressor</keyword>
<keyword id="KW-0346">Stress response</keyword>
<keyword id="KW-0804">Transcription</keyword>
<keyword id="KW-0805">Transcription regulation</keyword>
<reference key="1">
    <citation type="journal article" date="2002" name="Proc. Natl. Acad. Sci. U.S.A.">
        <title>Genome sequence and comparative microarray analysis of serotype M18 group A Streptococcus strains associated with acute rheumatic fever outbreaks.</title>
        <authorList>
            <person name="Smoot J.C."/>
            <person name="Barbian K.D."/>
            <person name="Van Gompel J.J."/>
            <person name="Smoot L.M."/>
            <person name="Chaussee M.S."/>
            <person name="Sylva G.L."/>
            <person name="Sturdevant D.E."/>
            <person name="Ricklefs S.M."/>
            <person name="Porcella S.F."/>
            <person name="Parkins L.D."/>
            <person name="Beres S.B."/>
            <person name="Campbell D.S."/>
            <person name="Smith T.M."/>
            <person name="Zhang Q."/>
            <person name="Kapur V."/>
            <person name="Daly J.A."/>
            <person name="Veasy L.G."/>
            <person name="Musser J.M."/>
        </authorList>
    </citation>
    <scope>NUCLEOTIDE SEQUENCE [LARGE SCALE GENOMIC DNA]</scope>
    <source>
        <strain>MGAS8232</strain>
    </source>
</reference>
<comment type="function">
    <text evidence="1">Negative regulator of class I heat shock genes (grpE-dnaK-dnaJ and groELS operons). Prevents heat-shock induction of these operons.</text>
</comment>
<comment type="similarity">
    <text evidence="1">Belongs to the HrcA family.</text>
</comment>
<accession>Q8NZM6</accession>